<organism>
    <name type="scientific">Pseudomonas putida (strain ATCC 47054 / DSM 6125 / CFBP 8728 / NCIMB 11950 / KT2440)</name>
    <dbReference type="NCBI Taxonomy" id="160488"/>
    <lineage>
        <taxon>Bacteria</taxon>
        <taxon>Pseudomonadati</taxon>
        <taxon>Pseudomonadota</taxon>
        <taxon>Gammaproteobacteria</taxon>
        <taxon>Pseudomonadales</taxon>
        <taxon>Pseudomonadaceae</taxon>
        <taxon>Pseudomonas</taxon>
    </lineage>
</organism>
<protein>
    <recommendedName>
        <fullName>Probable chromosome-partitioning protein ParB</fullName>
    </recommendedName>
</protein>
<comment type="function">
    <text evidence="1">Involved in chromosome partition. Localize to both poles of the predivisional cell following completion of DNA replication. Binds to the DNA origin of replication (By similarity).</text>
</comment>
<comment type="similarity">
    <text evidence="2">Belongs to the ParB family.</text>
</comment>
<keyword id="KW-0159">Chromosome partition</keyword>
<keyword id="KW-0238">DNA-binding</keyword>
<keyword id="KW-1185">Reference proteome</keyword>
<gene>
    <name type="primary">parB</name>
    <name type="ordered locus">PP_0001</name>
</gene>
<feature type="chain" id="PRO_0000178689" description="Probable chromosome-partitioning protein ParB">
    <location>
        <begin position="1"/>
        <end position="290"/>
    </location>
</feature>
<accession>P0A151</accession>
<accession>P31857</accession>
<name>PARB_PSEPK</name>
<reference key="1">
    <citation type="journal article" date="2002" name="Environ. Microbiol.">
        <title>Complete genome sequence and comparative analysis of the metabolically versatile Pseudomonas putida KT2440.</title>
        <authorList>
            <person name="Nelson K.E."/>
            <person name="Weinel C."/>
            <person name="Paulsen I.T."/>
            <person name="Dodson R.J."/>
            <person name="Hilbert H."/>
            <person name="Martins dos Santos V.A.P."/>
            <person name="Fouts D.E."/>
            <person name="Gill S.R."/>
            <person name="Pop M."/>
            <person name="Holmes M."/>
            <person name="Brinkac L.M."/>
            <person name="Beanan M.J."/>
            <person name="DeBoy R.T."/>
            <person name="Daugherty S.C."/>
            <person name="Kolonay J.F."/>
            <person name="Madupu R."/>
            <person name="Nelson W.C."/>
            <person name="White O."/>
            <person name="Peterson J.D."/>
            <person name="Khouri H.M."/>
            <person name="Hance I."/>
            <person name="Chris Lee P."/>
            <person name="Holtzapple E.K."/>
            <person name="Scanlan D."/>
            <person name="Tran K."/>
            <person name="Moazzez A."/>
            <person name="Utterback T.R."/>
            <person name="Rizzo M."/>
            <person name="Lee K."/>
            <person name="Kosack D."/>
            <person name="Moestl D."/>
            <person name="Wedler H."/>
            <person name="Lauber J."/>
            <person name="Stjepandic D."/>
            <person name="Hoheisel J."/>
            <person name="Straetz M."/>
            <person name="Heim S."/>
            <person name="Kiewitz C."/>
            <person name="Eisen J.A."/>
            <person name="Timmis K.N."/>
            <person name="Duesterhoeft A."/>
            <person name="Tuemmler B."/>
            <person name="Fraser C.M."/>
        </authorList>
    </citation>
    <scope>NUCLEOTIDE SEQUENCE [LARGE SCALE GENOMIC DNA]</scope>
    <source>
        <strain>ATCC 47054 / DSM 6125 / CFBP 8728 / NCIMB 11950 / KT2440</strain>
    </source>
</reference>
<sequence length="290" mass="32390">MAVKKRGLGRGLDALLSGPSVSALEEQAVKIDQKELQHLPVELVQRGKYQPRRDMDPEALEELAHSIRNHGVMQPIVVRPIGDNRYEIIAGERRWRATQQAGLDTIPAMVREVPDEAAIAMALIENIQREDLNPLEEAMALQRLQQEFELTQQQVADAVGKSRVTVANLLRLITLPDAIKTMLAHGDLEMGHARALLGLDENRQEEGARHVVARGLTVRQTEALVRQWLSDKPDPVEPSKPDPDIARLEQRLAERLGSAVQIRHGNKGKGQLVIRYNSLDELQGVLAHIR</sequence>
<evidence type="ECO:0000250" key="1"/>
<evidence type="ECO:0000305" key="2"/>
<dbReference type="EMBL" id="AE015451">
    <property type="protein sequence ID" value="AAN65635.1"/>
    <property type="molecule type" value="Genomic_DNA"/>
</dbReference>
<dbReference type="RefSeq" id="NP_742171.1">
    <property type="nucleotide sequence ID" value="NC_002947.4"/>
</dbReference>
<dbReference type="RefSeq" id="WP_003253185.1">
    <property type="nucleotide sequence ID" value="NZ_CP169744.1"/>
</dbReference>
<dbReference type="SMR" id="P0A151"/>
<dbReference type="STRING" id="160488.PP_0001"/>
<dbReference type="PaxDb" id="160488-PP_0001"/>
<dbReference type="KEGG" id="ppu:PP_0001"/>
<dbReference type="PATRIC" id="fig|160488.4.peg.1"/>
<dbReference type="eggNOG" id="COG1475">
    <property type="taxonomic scope" value="Bacteria"/>
</dbReference>
<dbReference type="HOGENOM" id="CLU_023853_0_0_6"/>
<dbReference type="OrthoDB" id="9802051at2"/>
<dbReference type="PhylomeDB" id="P0A151"/>
<dbReference type="BioCyc" id="PPUT160488:G1G01-1-MONOMER"/>
<dbReference type="Proteomes" id="UP000000556">
    <property type="component" value="Chromosome"/>
</dbReference>
<dbReference type="GO" id="GO:0005694">
    <property type="term" value="C:chromosome"/>
    <property type="evidence" value="ECO:0007669"/>
    <property type="project" value="TreeGrafter"/>
</dbReference>
<dbReference type="GO" id="GO:0003677">
    <property type="term" value="F:DNA binding"/>
    <property type="evidence" value="ECO:0007669"/>
    <property type="project" value="UniProtKB-KW"/>
</dbReference>
<dbReference type="GO" id="GO:0007059">
    <property type="term" value="P:chromosome segregation"/>
    <property type="evidence" value="ECO:0007669"/>
    <property type="project" value="UniProtKB-KW"/>
</dbReference>
<dbReference type="GO" id="GO:0045881">
    <property type="term" value="P:positive regulation of sporulation resulting in formation of a cellular spore"/>
    <property type="evidence" value="ECO:0007669"/>
    <property type="project" value="TreeGrafter"/>
</dbReference>
<dbReference type="CDD" id="cd16393">
    <property type="entry name" value="SPO0J_N"/>
    <property type="match status" value="1"/>
</dbReference>
<dbReference type="FunFam" id="1.10.10.2830:FF:000001">
    <property type="entry name" value="Chromosome partitioning protein ParB"/>
    <property type="match status" value="1"/>
</dbReference>
<dbReference type="FunFam" id="3.90.1530.30:FF:000001">
    <property type="entry name" value="Chromosome partitioning protein ParB"/>
    <property type="match status" value="1"/>
</dbReference>
<dbReference type="Gene3D" id="1.10.10.2830">
    <property type="match status" value="1"/>
</dbReference>
<dbReference type="Gene3D" id="3.90.1530.30">
    <property type="match status" value="1"/>
</dbReference>
<dbReference type="InterPro" id="IPR050336">
    <property type="entry name" value="Chromosome_partition/occlusion"/>
</dbReference>
<dbReference type="InterPro" id="IPR041468">
    <property type="entry name" value="HTH_ParB/Spo0J"/>
</dbReference>
<dbReference type="InterPro" id="IPR004437">
    <property type="entry name" value="ParB/RepB/Spo0J"/>
</dbReference>
<dbReference type="InterPro" id="IPR003115">
    <property type="entry name" value="ParB/Sulfiredoxin_dom"/>
</dbReference>
<dbReference type="InterPro" id="IPR036086">
    <property type="entry name" value="ParB/Sulfiredoxin_sf"/>
</dbReference>
<dbReference type="InterPro" id="IPR057240">
    <property type="entry name" value="ParB_dimer_C"/>
</dbReference>
<dbReference type="NCBIfam" id="TIGR00180">
    <property type="entry name" value="parB_part"/>
    <property type="match status" value="1"/>
</dbReference>
<dbReference type="PANTHER" id="PTHR33375">
    <property type="entry name" value="CHROMOSOME-PARTITIONING PROTEIN PARB-RELATED"/>
    <property type="match status" value="1"/>
</dbReference>
<dbReference type="PANTHER" id="PTHR33375:SF1">
    <property type="entry name" value="CHROMOSOME-PARTITIONING PROTEIN PARB-RELATED"/>
    <property type="match status" value="1"/>
</dbReference>
<dbReference type="Pfam" id="PF17762">
    <property type="entry name" value="HTH_ParB"/>
    <property type="match status" value="1"/>
</dbReference>
<dbReference type="Pfam" id="PF23552">
    <property type="entry name" value="ParB_dimer"/>
    <property type="match status" value="1"/>
</dbReference>
<dbReference type="Pfam" id="PF02195">
    <property type="entry name" value="ParBc"/>
    <property type="match status" value="1"/>
</dbReference>
<dbReference type="SMART" id="SM00470">
    <property type="entry name" value="ParB"/>
    <property type="match status" value="1"/>
</dbReference>
<dbReference type="SUPFAM" id="SSF110849">
    <property type="entry name" value="ParB/Sulfiredoxin"/>
    <property type="match status" value="1"/>
</dbReference>
<proteinExistence type="inferred from homology"/>